<proteinExistence type="inferred from homology"/>
<comment type="function">
    <text evidence="1">Catalyzes the phosphorylation of N-acetyl-D-glucosamine (GlcNAc) derived from cell-wall degradation, yielding GlcNAc-6-P.</text>
</comment>
<comment type="catalytic activity">
    <reaction evidence="1">
        <text>N-acetyl-D-glucosamine + ATP = N-acetyl-D-glucosamine 6-phosphate + ADP + H(+)</text>
        <dbReference type="Rhea" id="RHEA:17417"/>
        <dbReference type="ChEBI" id="CHEBI:15378"/>
        <dbReference type="ChEBI" id="CHEBI:30616"/>
        <dbReference type="ChEBI" id="CHEBI:57513"/>
        <dbReference type="ChEBI" id="CHEBI:456216"/>
        <dbReference type="ChEBI" id="CHEBI:506227"/>
        <dbReference type="EC" id="2.7.1.59"/>
    </reaction>
</comment>
<comment type="pathway">
    <text evidence="1">Cell wall biogenesis; peptidoglycan recycling.</text>
</comment>
<comment type="similarity">
    <text evidence="1">Belongs to the ROK (NagC/XylR) family. NagK subfamily.</text>
</comment>
<sequence length="303" mass="33012">MYYGFDIGGTKIALGVFDSGRQLQWEKRVPTPRDSYDAFLDAVCELVAEADQRFGCKGSVGIGIPGMPETEDGTLYAANVPAASGKPLRADLSARLDRDVRLDNDANCFALSEAWDDEFTQYPLVMGLILGTGVGGGLIFNGKPITGKSYITGEFGHMRLPVDALTMMGLDFPLRRCGCGQHGCIENYLSGRGFAWLYQHYYHQPLPAPEIIALYDQGDEQARAHVERYLDLLAVCLGNILTIVDPDLVVIGGGLSNFPAITTQLADRLPRHLLPVARVPRIERARHGDAGGMRGAAFLHLTD</sequence>
<evidence type="ECO:0000255" key="1">
    <source>
        <dbReference type="HAMAP-Rule" id="MF_01271"/>
    </source>
</evidence>
<gene>
    <name evidence="1" type="primary">nagK</name>
    <name type="ordered locus">Z1760</name>
    <name type="ordered locus">ECs1497</name>
</gene>
<name>NAGK_ECO57</name>
<reference key="1">
    <citation type="journal article" date="2001" name="Nature">
        <title>Genome sequence of enterohaemorrhagic Escherichia coli O157:H7.</title>
        <authorList>
            <person name="Perna N.T."/>
            <person name="Plunkett G. III"/>
            <person name="Burland V."/>
            <person name="Mau B."/>
            <person name="Glasner J.D."/>
            <person name="Rose D.J."/>
            <person name="Mayhew G.F."/>
            <person name="Evans P.S."/>
            <person name="Gregor J."/>
            <person name="Kirkpatrick H.A."/>
            <person name="Posfai G."/>
            <person name="Hackett J."/>
            <person name="Klink S."/>
            <person name="Boutin A."/>
            <person name="Shao Y."/>
            <person name="Miller L."/>
            <person name="Grotbeck E.J."/>
            <person name="Davis N.W."/>
            <person name="Lim A."/>
            <person name="Dimalanta E.T."/>
            <person name="Potamousis K."/>
            <person name="Apodaca J."/>
            <person name="Anantharaman T.S."/>
            <person name="Lin J."/>
            <person name="Yen G."/>
            <person name="Schwartz D.C."/>
            <person name="Welch R.A."/>
            <person name="Blattner F.R."/>
        </authorList>
    </citation>
    <scope>NUCLEOTIDE SEQUENCE [LARGE SCALE GENOMIC DNA]</scope>
    <source>
        <strain>O157:H7 / EDL933 / ATCC 700927 / EHEC</strain>
    </source>
</reference>
<reference key="2">
    <citation type="journal article" date="2001" name="DNA Res.">
        <title>Complete genome sequence of enterohemorrhagic Escherichia coli O157:H7 and genomic comparison with a laboratory strain K-12.</title>
        <authorList>
            <person name="Hayashi T."/>
            <person name="Makino K."/>
            <person name="Ohnishi M."/>
            <person name="Kurokawa K."/>
            <person name="Ishii K."/>
            <person name="Yokoyama K."/>
            <person name="Han C.-G."/>
            <person name="Ohtsubo E."/>
            <person name="Nakayama K."/>
            <person name="Murata T."/>
            <person name="Tanaka M."/>
            <person name="Tobe T."/>
            <person name="Iida T."/>
            <person name="Takami H."/>
            <person name="Honda T."/>
            <person name="Sasakawa C."/>
            <person name="Ogasawara N."/>
            <person name="Yasunaga T."/>
            <person name="Kuhara S."/>
            <person name="Shiba T."/>
            <person name="Hattori M."/>
            <person name="Shinagawa H."/>
        </authorList>
    </citation>
    <scope>NUCLEOTIDE SEQUENCE [LARGE SCALE GENOMIC DNA]</scope>
    <source>
        <strain>O157:H7 / Sakai / RIMD 0509952 / EHEC</strain>
    </source>
</reference>
<accession>Q8X8E1</accession>
<accession>Q7AF71</accession>
<dbReference type="EC" id="2.7.1.59" evidence="1"/>
<dbReference type="EMBL" id="AE005174">
    <property type="protein sequence ID" value="AAG55865.1"/>
    <property type="molecule type" value="Genomic_DNA"/>
</dbReference>
<dbReference type="EMBL" id="BA000007">
    <property type="protein sequence ID" value="BAB34920.1"/>
    <property type="molecule type" value="Genomic_DNA"/>
</dbReference>
<dbReference type="PIR" id="A99816">
    <property type="entry name" value="A99816"/>
</dbReference>
<dbReference type="PIR" id="E85675">
    <property type="entry name" value="E85675"/>
</dbReference>
<dbReference type="RefSeq" id="NP_309524.1">
    <property type="nucleotide sequence ID" value="NC_002695.1"/>
</dbReference>
<dbReference type="RefSeq" id="WP_000291263.1">
    <property type="nucleotide sequence ID" value="NZ_VOAI01000018.1"/>
</dbReference>
<dbReference type="SMR" id="Q8X8E1"/>
<dbReference type="STRING" id="155864.Z1760"/>
<dbReference type="GeneID" id="912695"/>
<dbReference type="KEGG" id="ece:Z1760"/>
<dbReference type="KEGG" id="ecs:ECs_1497"/>
<dbReference type="PATRIC" id="fig|386585.9.peg.1599"/>
<dbReference type="eggNOG" id="COG1940">
    <property type="taxonomic scope" value="Bacteria"/>
</dbReference>
<dbReference type="HOGENOM" id="CLU_036604_0_3_6"/>
<dbReference type="OMA" id="VNVPGWR"/>
<dbReference type="UniPathway" id="UPA00544"/>
<dbReference type="Proteomes" id="UP000000558">
    <property type="component" value="Chromosome"/>
</dbReference>
<dbReference type="Proteomes" id="UP000002519">
    <property type="component" value="Chromosome"/>
</dbReference>
<dbReference type="GO" id="GO:0005524">
    <property type="term" value="F:ATP binding"/>
    <property type="evidence" value="ECO:0007669"/>
    <property type="project" value="UniProtKB-UniRule"/>
</dbReference>
<dbReference type="GO" id="GO:0045127">
    <property type="term" value="F:N-acetylglucosamine kinase activity"/>
    <property type="evidence" value="ECO:0007669"/>
    <property type="project" value="UniProtKB-UniRule"/>
</dbReference>
<dbReference type="GO" id="GO:0008270">
    <property type="term" value="F:zinc ion binding"/>
    <property type="evidence" value="ECO:0007669"/>
    <property type="project" value="UniProtKB-UniRule"/>
</dbReference>
<dbReference type="GO" id="GO:0006044">
    <property type="term" value="P:N-acetylglucosamine metabolic process"/>
    <property type="evidence" value="ECO:0007669"/>
    <property type="project" value="UniProtKB-UniRule"/>
</dbReference>
<dbReference type="GO" id="GO:0009254">
    <property type="term" value="P:peptidoglycan turnover"/>
    <property type="evidence" value="ECO:0007669"/>
    <property type="project" value="UniProtKB-UniRule"/>
</dbReference>
<dbReference type="CDD" id="cd24057">
    <property type="entry name" value="ASKHA_NBD_ROK_NAGK"/>
    <property type="match status" value="1"/>
</dbReference>
<dbReference type="FunFam" id="3.30.420.40:FF:000049">
    <property type="entry name" value="N-acetyl-D-glucosamine kinase"/>
    <property type="match status" value="1"/>
</dbReference>
<dbReference type="FunFam" id="3.30.420.40:FF:000051">
    <property type="entry name" value="N-acetyl-D-glucosamine kinase"/>
    <property type="match status" value="1"/>
</dbReference>
<dbReference type="Gene3D" id="3.30.420.40">
    <property type="match status" value="2"/>
</dbReference>
<dbReference type="HAMAP" id="MF_01271">
    <property type="entry name" value="GlcNAc_kinase"/>
    <property type="match status" value="1"/>
</dbReference>
<dbReference type="InterPro" id="IPR043129">
    <property type="entry name" value="ATPase_NBD"/>
</dbReference>
<dbReference type="InterPro" id="IPR023505">
    <property type="entry name" value="N-acetyl-D-glucosamine_kinase"/>
</dbReference>
<dbReference type="InterPro" id="IPR000600">
    <property type="entry name" value="ROK"/>
</dbReference>
<dbReference type="InterPro" id="IPR049874">
    <property type="entry name" value="ROK_cs"/>
</dbReference>
<dbReference type="NCBIfam" id="NF009835">
    <property type="entry name" value="PRK13310.1"/>
    <property type="match status" value="1"/>
</dbReference>
<dbReference type="PANTHER" id="PTHR18964:SF162">
    <property type="entry name" value="N-ACETYL-D-GLUCOSAMINE KINASE"/>
    <property type="match status" value="1"/>
</dbReference>
<dbReference type="PANTHER" id="PTHR18964">
    <property type="entry name" value="ROK (REPRESSOR, ORF, KINASE) FAMILY"/>
    <property type="match status" value="1"/>
</dbReference>
<dbReference type="Pfam" id="PF00480">
    <property type="entry name" value="ROK"/>
    <property type="match status" value="1"/>
</dbReference>
<dbReference type="SUPFAM" id="SSF53067">
    <property type="entry name" value="Actin-like ATPase domain"/>
    <property type="match status" value="1"/>
</dbReference>
<dbReference type="PROSITE" id="PS01125">
    <property type="entry name" value="ROK"/>
    <property type="match status" value="1"/>
</dbReference>
<feature type="chain" id="PRO_0000270101" description="N-acetyl-D-glucosamine kinase">
    <location>
        <begin position="1"/>
        <end position="303"/>
    </location>
</feature>
<feature type="binding site" evidence="1">
    <location>
        <begin position="4"/>
        <end position="11"/>
    </location>
    <ligand>
        <name>ATP</name>
        <dbReference type="ChEBI" id="CHEBI:30616"/>
    </ligand>
</feature>
<feature type="binding site" evidence="1">
    <location>
        <begin position="133"/>
        <end position="140"/>
    </location>
    <ligand>
        <name>ATP</name>
        <dbReference type="ChEBI" id="CHEBI:30616"/>
    </ligand>
</feature>
<feature type="binding site" evidence="1">
    <location>
        <position position="157"/>
    </location>
    <ligand>
        <name>Zn(2+)</name>
        <dbReference type="ChEBI" id="CHEBI:29105"/>
    </ligand>
</feature>
<feature type="binding site" evidence="1">
    <location>
        <position position="177"/>
    </location>
    <ligand>
        <name>Zn(2+)</name>
        <dbReference type="ChEBI" id="CHEBI:29105"/>
    </ligand>
</feature>
<feature type="binding site" evidence="1">
    <location>
        <position position="179"/>
    </location>
    <ligand>
        <name>Zn(2+)</name>
        <dbReference type="ChEBI" id="CHEBI:29105"/>
    </ligand>
</feature>
<feature type="binding site" evidence="1">
    <location>
        <position position="184"/>
    </location>
    <ligand>
        <name>Zn(2+)</name>
        <dbReference type="ChEBI" id="CHEBI:29105"/>
    </ligand>
</feature>
<keyword id="KW-0067">ATP-binding</keyword>
<keyword id="KW-0119">Carbohydrate metabolism</keyword>
<keyword id="KW-0418">Kinase</keyword>
<keyword id="KW-0479">Metal-binding</keyword>
<keyword id="KW-0547">Nucleotide-binding</keyword>
<keyword id="KW-1185">Reference proteome</keyword>
<keyword id="KW-0808">Transferase</keyword>
<keyword id="KW-0862">Zinc</keyword>
<protein>
    <recommendedName>
        <fullName evidence="1">N-acetyl-D-glucosamine kinase</fullName>
        <ecNumber evidence="1">2.7.1.59</ecNumber>
    </recommendedName>
    <alternativeName>
        <fullName evidence="1">GlcNAc kinase</fullName>
    </alternativeName>
</protein>
<organism>
    <name type="scientific">Escherichia coli O157:H7</name>
    <dbReference type="NCBI Taxonomy" id="83334"/>
    <lineage>
        <taxon>Bacteria</taxon>
        <taxon>Pseudomonadati</taxon>
        <taxon>Pseudomonadota</taxon>
        <taxon>Gammaproteobacteria</taxon>
        <taxon>Enterobacterales</taxon>
        <taxon>Enterobacteriaceae</taxon>
        <taxon>Escherichia</taxon>
    </lineage>
</organism>